<sequence>METATLVAISISGLLVSFTGYALYTAFGQPSQQLRDPFEEHGD</sequence>
<geneLocation type="chloroplast"/>
<organism>
    <name type="scientific">Triticum aestivum</name>
    <name type="common">Wheat</name>
    <dbReference type="NCBI Taxonomy" id="4565"/>
    <lineage>
        <taxon>Eukaryota</taxon>
        <taxon>Viridiplantae</taxon>
        <taxon>Streptophyta</taxon>
        <taxon>Embryophyta</taxon>
        <taxon>Tracheophyta</taxon>
        <taxon>Spermatophyta</taxon>
        <taxon>Magnoliopsida</taxon>
        <taxon>Liliopsida</taxon>
        <taxon>Poales</taxon>
        <taxon>Poaceae</taxon>
        <taxon>BOP clade</taxon>
        <taxon>Pooideae</taxon>
        <taxon>Triticodae</taxon>
        <taxon>Triticeae</taxon>
        <taxon>Triticinae</taxon>
        <taxon>Triticum</taxon>
    </lineage>
</organism>
<name>PSBN_WHEAT</name>
<feature type="chain" id="PRO_0000207970" description="Protein PsbN">
    <location>
        <begin position="1"/>
        <end position="43"/>
    </location>
</feature>
<feature type="transmembrane region" description="Helical" evidence="1">
    <location>
        <begin position="5"/>
        <end position="27"/>
    </location>
</feature>
<gene>
    <name evidence="1" type="primary">psbN</name>
</gene>
<protein>
    <recommendedName>
        <fullName evidence="1">Protein PsbN</fullName>
    </recommendedName>
</protein>
<evidence type="ECO:0000255" key="1">
    <source>
        <dbReference type="HAMAP-Rule" id="MF_00293"/>
    </source>
</evidence>
<dbReference type="EMBL" id="X54749">
    <property type="protein sequence ID" value="CAA38543.1"/>
    <property type="molecule type" value="Genomic_DNA"/>
</dbReference>
<dbReference type="EMBL" id="AB042240">
    <property type="protein sequence ID" value="BAB47061.1"/>
    <property type="molecule type" value="Genomic_DNA"/>
</dbReference>
<dbReference type="PIR" id="S14142">
    <property type="entry name" value="S14142"/>
</dbReference>
<dbReference type="RefSeq" id="NP_114285.1">
    <property type="nucleotide sequence ID" value="NC_002762.1"/>
</dbReference>
<dbReference type="SMR" id="P68855"/>
<dbReference type="STRING" id="4565.P68855"/>
<dbReference type="PaxDb" id="4565-EPlTAEP00000010021"/>
<dbReference type="EnsemblPlants" id="TraesCLE_scaffold_1176761_01G000200.1">
    <property type="protein sequence ID" value="TraesCLE_scaffold_1176761_01G000200.1"/>
    <property type="gene ID" value="TraesCLE_scaffold_1176761_01G000200"/>
</dbReference>
<dbReference type="EnsemblPlants" id="TraesCLE_scaffold_805588_01G000100.1">
    <property type="protein sequence ID" value="TraesCLE_scaffold_805588_01G000100.1"/>
    <property type="gene ID" value="TraesCLE_scaffold_805588_01G000100"/>
</dbReference>
<dbReference type="EnsemblPlants" id="TraesCS2D03G1232600.1">
    <property type="protein sequence ID" value="TraesCS2D03G1232600.1.CDS1"/>
    <property type="gene ID" value="TraesCS2D03G1232600"/>
</dbReference>
<dbReference type="EnsemblPlants" id="TraesCS3B02G187400.1">
    <property type="protein sequence ID" value="TraesCS3B02G187400.1.cds1"/>
    <property type="gene ID" value="TraesCS3B02G187400"/>
</dbReference>
<dbReference type="EnsemblPlants" id="TraesCS3B03G0448600.1">
    <property type="protein sequence ID" value="TraesCS3B03G0448600.1.CDS1"/>
    <property type="gene ID" value="TraesCS3B03G0448600"/>
</dbReference>
<dbReference type="EnsemblPlants" id="TraesCS5D03G1229800.1">
    <property type="protein sequence ID" value="TraesCS5D03G1229800.1.CDS1"/>
    <property type="gene ID" value="TraesCS5D03G1229800"/>
</dbReference>
<dbReference type="EnsemblPlants" id="TraesCS7B02G046500.1">
    <property type="protein sequence ID" value="TraesCS7B02G046500.1.cds1"/>
    <property type="gene ID" value="TraesCS7B02G046500"/>
</dbReference>
<dbReference type="EnsemblPlants" id="TraesCSU02G035400.1">
    <property type="protein sequence ID" value="TraesCSU02G035400.1.cds1"/>
    <property type="gene ID" value="TraesCSU02G035400"/>
</dbReference>
<dbReference type="EnsemblPlants" id="TraesPARA_EIv1.0_0758360.1">
    <property type="protein sequence ID" value="TraesPARA_EIv1.0_0758360.1.CDS1"/>
    <property type="gene ID" value="TraesPARA_EIv1.0_0758360"/>
</dbReference>
<dbReference type="EnsemblPlants" id="TraesPARA_EIv1.0_2054880.1">
    <property type="protein sequence ID" value="TraesPARA_EIv1.0_2054880.1.CDS1"/>
    <property type="gene ID" value="TraesPARA_EIv1.0_2054880"/>
</dbReference>
<dbReference type="EnsemblPlants" id="TraesPARA_EIv1.0_2526970.1">
    <property type="protein sequence ID" value="TraesPARA_EIv1.0_2526970.1.CDS1"/>
    <property type="gene ID" value="TraesPARA_EIv1.0_2526970"/>
</dbReference>
<dbReference type="EnsemblPlants" id="TraesPARA_EIv1.0_2644800.1">
    <property type="protein sequence ID" value="TraesPARA_EIv1.0_2644800.1.CDS1"/>
    <property type="gene ID" value="TraesPARA_EIv1.0_2644800"/>
</dbReference>
<dbReference type="EnsemblPlants" id="TraesPARA_EIv1.0_2680760.1">
    <property type="protein sequence ID" value="TraesPARA_EIv1.0_2680760.1.CDS1"/>
    <property type="gene ID" value="TraesPARA_EIv1.0_2680760"/>
</dbReference>
<dbReference type="EnsemblPlants" id="TraesPARA_EIv1.0_2682010.1">
    <property type="protein sequence ID" value="TraesPARA_EIv1.0_2682010.1.CDS1"/>
    <property type="gene ID" value="TraesPARA_EIv1.0_2682010"/>
</dbReference>
<dbReference type="EnsemblPlants" id="TraesRN1A0100364000.1">
    <property type="protein sequence ID" value="TraesRN1A0100364000.1"/>
    <property type="gene ID" value="TraesRN1A0100364000"/>
</dbReference>
<dbReference type="EnsemblPlants" id="TraesRN1A0100364100.1">
    <property type="protein sequence ID" value="TraesRN1A0100364100.1"/>
    <property type="gene ID" value="TraesRN1A0100364100"/>
</dbReference>
<dbReference type="EnsemblPlants" id="TraesRN1D0100468100.1">
    <property type="protein sequence ID" value="TraesRN1D0100468100.1"/>
    <property type="gene ID" value="TraesRN1D0100468100"/>
</dbReference>
<dbReference type="EnsemblPlants" id="TraesRN2D0100485600.1">
    <property type="protein sequence ID" value="TraesRN2D0100485600.1"/>
    <property type="gene ID" value="TraesRN2D0100485600"/>
</dbReference>
<dbReference type="EnsemblPlants" id="TraesRN2D0101205000.1">
    <property type="protein sequence ID" value="TraesRN2D0101205000.1"/>
    <property type="gene ID" value="TraesRN2D0101205000"/>
</dbReference>
<dbReference type="EnsemblPlants" id="TraesRN3B0100438700.1">
    <property type="protein sequence ID" value="TraesRN3B0100438700.1"/>
    <property type="gene ID" value="TraesRN3B0100438700"/>
</dbReference>
<dbReference type="EnsemblPlants" id="TraesRN4D0100078500.1">
    <property type="protein sequence ID" value="TraesRN4D0100078500.1"/>
    <property type="gene ID" value="TraesRN4D0100078500"/>
</dbReference>
<dbReference type="EnsemblPlants" id="TraesRN5D0100019800.1">
    <property type="protein sequence ID" value="TraesRN5D0100019800.1"/>
    <property type="gene ID" value="TraesRN5D0100019800"/>
</dbReference>
<dbReference type="EnsemblPlants" id="TraesRN5D0100539500.1">
    <property type="protein sequence ID" value="TraesRN5D0100539500.1"/>
    <property type="gene ID" value="TraesRN5D0100539500"/>
</dbReference>
<dbReference type="EnsemblPlants" id="TraesWEE_scaffold_1276016_01G000200.1">
    <property type="protein sequence ID" value="TraesWEE_scaffold_1276016_01G000200.1"/>
    <property type="gene ID" value="TraesWEE_scaffold_1276016_01G000200"/>
</dbReference>
<dbReference type="EnsemblPlants" id="TraesWEE_scaffold_1328984_01G000100.1">
    <property type="protein sequence ID" value="TraesWEE_scaffold_1328984_01G000100.1"/>
    <property type="gene ID" value="TraesWEE_scaffold_1328984_01G000100"/>
</dbReference>
<dbReference type="EnsemblPlants" id="TraesWEE_scaffold_1395938_01G000100.1">
    <property type="protein sequence ID" value="TraesWEE_scaffold_1395938_01G000100.1"/>
    <property type="gene ID" value="TraesWEE_scaffold_1395938_01G000100"/>
</dbReference>
<dbReference type="GeneID" id="803154"/>
<dbReference type="Gramene" id="TraesCLE_scaffold_1176761_01G000200.1">
    <property type="protein sequence ID" value="TraesCLE_scaffold_1176761_01G000200.1"/>
    <property type="gene ID" value="TraesCLE_scaffold_1176761_01G000200"/>
</dbReference>
<dbReference type="Gramene" id="TraesCLE_scaffold_805588_01G000100.1">
    <property type="protein sequence ID" value="TraesCLE_scaffold_805588_01G000100.1"/>
    <property type="gene ID" value="TraesCLE_scaffold_805588_01G000100"/>
</dbReference>
<dbReference type="Gramene" id="TraesCS2D03G1232600.1">
    <property type="protein sequence ID" value="TraesCS2D03G1232600.1.CDS1"/>
    <property type="gene ID" value="TraesCS2D03G1232600"/>
</dbReference>
<dbReference type="Gramene" id="TraesCS3B02G187400.1">
    <property type="protein sequence ID" value="TraesCS3B02G187400.1.cds1"/>
    <property type="gene ID" value="TraesCS3B02G187400"/>
</dbReference>
<dbReference type="Gramene" id="TraesCS3B03G0448600.1">
    <property type="protein sequence ID" value="TraesCS3B03G0448600.1.CDS1"/>
    <property type="gene ID" value="TraesCS3B03G0448600"/>
</dbReference>
<dbReference type="Gramene" id="TraesCS5D03G1229800.1">
    <property type="protein sequence ID" value="TraesCS5D03G1229800.1.CDS1"/>
    <property type="gene ID" value="TraesCS5D03G1229800"/>
</dbReference>
<dbReference type="Gramene" id="TraesCS7B02G046500.1">
    <property type="protein sequence ID" value="TraesCS7B02G046500.1.cds1"/>
    <property type="gene ID" value="TraesCS7B02G046500"/>
</dbReference>
<dbReference type="Gramene" id="TraesCSU02G035400.1">
    <property type="protein sequence ID" value="TraesCSU02G035400.1.cds1"/>
    <property type="gene ID" value="TraesCSU02G035400"/>
</dbReference>
<dbReference type="Gramene" id="TraesPARA_EIv1.0_0758360.1">
    <property type="protein sequence ID" value="TraesPARA_EIv1.0_0758360.1.CDS1"/>
    <property type="gene ID" value="TraesPARA_EIv1.0_0758360"/>
</dbReference>
<dbReference type="Gramene" id="TraesPARA_EIv1.0_2054880.1">
    <property type="protein sequence ID" value="TraesPARA_EIv1.0_2054880.1.CDS1"/>
    <property type="gene ID" value="TraesPARA_EIv1.0_2054880"/>
</dbReference>
<dbReference type="Gramene" id="TraesPARA_EIv1.0_2526970.1">
    <property type="protein sequence ID" value="TraesPARA_EIv1.0_2526970.1.CDS1"/>
    <property type="gene ID" value="TraesPARA_EIv1.0_2526970"/>
</dbReference>
<dbReference type="Gramene" id="TraesPARA_EIv1.0_2644800.1">
    <property type="protein sequence ID" value="TraesPARA_EIv1.0_2644800.1.CDS1"/>
    <property type="gene ID" value="TraesPARA_EIv1.0_2644800"/>
</dbReference>
<dbReference type="Gramene" id="TraesPARA_EIv1.0_2680760.1">
    <property type="protein sequence ID" value="TraesPARA_EIv1.0_2680760.1.CDS1"/>
    <property type="gene ID" value="TraesPARA_EIv1.0_2680760"/>
</dbReference>
<dbReference type="Gramene" id="TraesPARA_EIv1.0_2682010.1">
    <property type="protein sequence ID" value="TraesPARA_EIv1.0_2682010.1.CDS1"/>
    <property type="gene ID" value="TraesPARA_EIv1.0_2682010"/>
</dbReference>
<dbReference type="Gramene" id="TraesRN1A0100364000.1">
    <property type="protein sequence ID" value="TraesRN1A0100364000.1"/>
    <property type="gene ID" value="TraesRN1A0100364000"/>
</dbReference>
<dbReference type="Gramene" id="TraesRN1A0100364100.1">
    <property type="protein sequence ID" value="TraesRN1A0100364100.1"/>
    <property type="gene ID" value="TraesRN1A0100364100"/>
</dbReference>
<dbReference type="Gramene" id="TraesRN1D0100468100.1">
    <property type="protein sequence ID" value="TraesRN1D0100468100.1"/>
    <property type="gene ID" value="TraesRN1D0100468100"/>
</dbReference>
<dbReference type="Gramene" id="TraesRN2D0100485600.1">
    <property type="protein sequence ID" value="TraesRN2D0100485600.1"/>
    <property type="gene ID" value="TraesRN2D0100485600"/>
</dbReference>
<dbReference type="Gramene" id="TraesRN2D0101205000.1">
    <property type="protein sequence ID" value="TraesRN2D0101205000.1"/>
    <property type="gene ID" value="TraesRN2D0101205000"/>
</dbReference>
<dbReference type="Gramene" id="TraesRN3B0100438700.1">
    <property type="protein sequence ID" value="TraesRN3B0100438700.1"/>
    <property type="gene ID" value="TraesRN3B0100438700"/>
</dbReference>
<dbReference type="Gramene" id="TraesRN4D0100078500.1">
    <property type="protein sequence ID" value="TraesRN4D0100078500.1"/>
    <property type="gene ID" value="TraesRN4D0100078500"/>
</dbReference>
<dbReference type="Gramene" id="TraesRN5D0100019800.1">
    <property type="protein sequence ID" value="TraesRN5D0100019800.1"/>
    <property type="gene ID" value="TraesRN5D0100019800"/>
</dbReference>
<dbReference type="Gramene" id="TraesRN5D0100539500.1">
    <property type="protein sequence ID" value="TraesRN5D0100539500.1"/>
    <property type="gene ID" value="TraesRN5D0100539500"/>
</dbReference>
<dbReference type="Gramene" id="TraesWEE_scaffold_1276016_01G000200.1">
    <property type="protein sequence ID" value="TraesWEE_scaffold_1276016_01G000200.1"/>
    <property type="gene ID" value="TraesWEE_scaffold_1276016_01G000200"/>
</dbReference>
<dbReference type="Gramene" id="TraesWEE_scaffold_1328984_01G000100.1">
    <property type="protein sequence ID" value="TraesWEE_scaffold_1328984_01G000100.1"/>
    <property type="gene ID" value="TraesWEE_scaffold_1328984_01G000100"/>
</dbReference>
<dbReference type="Gramene" id="TraesWEE_scaffold_1395938_01G000100.1">
    <property type="protein sequence ID" value="TraesWEE_scaffold_1395938_01G000100.1"/>
    <property type="gene ID" value="TraesWEE_scaffold_1395938_01G000100"/>
</dbReference>
<dbReference type="KEGG" id="taes:803154"/>
<dbReference type="eggNOG" id="ENOG502S8EW">
    <property type="taxonomic scope" value="Eukaryota"/>
</dbReference>
<dbReference type="HOGENOM" id="CLU_205504_0_0_1"/>
<dbReference type="OrthoDB" id="1860403at2759"/>
<dbReference type="Proteomes" id="UP000019116">
    <property type="component" value="Chloroplast"/>
</dbReference>
<dbReference type="GO" id="GO:0009535">
    <property type="term" value="C:chloroplast thylakoid membrane"/>
    <property type="evidence" value="ECO:0007669"/>
    <property type="project" value="UniProtKB-SubCell"/>
</dbReference>
<dbReference type="GO" id="GO:0015979">
    <property type="term" value="P:photosynthesis"/>
    <property type="evidence" value="ECO:0007669"/>
    <property type="project" value="InterPro"/>
</dbReference>
<dbReference type="HAMAP" id="MF_00293">
    <property type="entry name" value="PSII_PsbN"/>
    <property type="match status" value="1"/>
</dbReference>
<dbReference type="InterPro" id="IPR003398">
    <property type="entry name" value="PSII_PsbN"/>
</dbReference>
<dbReference type="PANTHER" id="PTHR35326">
    <property type="entry name" value="PROTEIN PSBN"/>
    <property type="match status" value="1"/>
</dbReference>
<dbReference type="PANTHER" id="PTHR35326:SF3">
    <property type="entry name" value="PROTEIN PSBN"/>
    <property type="match status" value="1"/>
</dbReference>
<dbReference type="Pfam" id="PF02468">
    <property type="entry name" value="PsbN"/>
    <property type="match status" value="1"/>
</dbReference>
<proteinExistence type="inferred from homology"/>
<keyword id="KW-0150">Chloroplast</keyword>
<keyword id="KW-0472">Membrane</keyword>
<keyword id="KW-0934">Plastid</keyword>
<keyword id="KW-1185">Reference proteome</keyword>
<keyword id="KW-0793">Thylakoid</keyword>
<keyword id="KW-0812">Transmembrane</keyword>
<keyword id="KW-1133">Transmembrane helix</keyword>
<accession>P68855</accession>
<accession>P12171</accession>
<comment type="function">
    <text evidence="1">May play a role in photosystem I and II biogenesis.</text>
</comment>
<comment type="subcellular location">
    <subcellularLocation>
        <location evidence="1">Plastid</location>
        <location evidence="1">Chloroplast thylakoid membrane</location>
        <topology evidence="1">Single-pass membrane protein</topology>
    </subcellularLocation>
</comment>
<comment type="similarity">
    <text evidence="1">Belongs to the PsbN family.</text>
</comment>
<comment type="caution">
    <text evidence="1">Originally thought to be a component of PSII; based on experiments in Synechocystis, N.tabacum and barley, and its absence from PSII in T.elongatus and T.vulcanus, this is probably not true.</text>
</comment>
<reference key="1">
    <citation type="journal article" date="1991" name="Curr. Genet.">
        <title>Differential expression of the psbB and psbH genes encoding the 47 kDa chlorophyll a-protein and the 10 kDa phosphoprotein of photosystem II during chloroplast development in wheat.</title>
        <authorList>
            <person name="Hird S.M."/>
            <person name="Webber A.N."/>
            <person name="Wilson R.J."/>
            <person name="Dyer T.A."/>
            <person name="Gray J.C."/>
        </authorList>
    </citation>
    <scope>NUCLEOTIDE SEQUENCE [GENOMIC DNA]</scope>
    <source>
        <strain>cv. Mardler</strain>
    </source>
</reference>
<reference key="2">
    <citation type="journal article" date="2000" name="Plant Mol. Biol. Rep.">
        <title>Chinese spring wheat (Triticum aestivum L.) chloroplast genome: complete sequence and contig clones.</title>
        <authorList>
            <person name="Ogihara Y."/>
            <person name="Isono K."/>
            <person name="Kojima T."/>
            <person name="Endo A."/>
            <person name="Hanaoka M."/>
            <person name="Shiina T."/>
            <person name="Terachi T."/>
            <person name="Utsugi S."/>
            <person name="Murata M."/>
            <person name="Mori N."/>
            <person name="Takumi S."/>
            <person name="Ikeo K."/>
            <person name="Gojobori T."/>
            <person name="Murai R."/>
            <person name="Murai K."/>
            <person name="Matsuoka Y."/>
            <person name="Ohnishi Y."/>
            <person name="Tajiri H."/>
            <person name="Tsunewaki K."/>
        </authorList>
    </citation>
    <scope>NUCLEOTIDE SEQUENCE [LARGE SCALE GENOMIC DNA]</scope>
    <source>
        <strain>cv. Chinese Spring</strain>
    </source>
</reference>